<name>NRDR_VIBA3</name>
<feature type="chain" id="PRO_1000191829" description="Transcriptional repressor NrdR">
    <location>
        <begin position="1"/>
        <end position="149"/>
    </location>
</feature>
<feature type="domain" description="ATP-cone" evidence="1">
    <location>
        <begin position="49"/>
        <end position="139"/>
    </location>
</feature>
<feature type="zinc finger region" evidence="1">
    <location>
        <begin position="3"/>
        <end position="34"/>
    </location>
</feature>
<reference key="1">
    <citation type="submission" date="2009-02" db="EMBL/GenBank/DDBJ databases">
        <title>Vibrio splendidus str. LGP32 complete genome.</title>
        <authorList>
            <person name="Mazel D."/>
            <person name="Le Roux F."/>
        </authorList>
    </citation>
    <scope>NUCLEOTIDE SEQUENCE [LARGE SCALE GENOMIC DNA]</scope>
    <source>
        <strain>LGP32</strain>
    </source>
</reference>
<organism>
    <name type="scientific">Vibrio atlanticus (strain LGP32)</name>
    <name type="common">Vibrio splendidus (strain Mel32)</name>
    <dbReference type="NCBI Taxonomy" id="575788"/>
    <lineage>
        <taxon>Bacteria</taxon>
        <taxon>Pseudomonadati</taxon>
        <taxon>Pseudomonadota</taxon>
        <taxon>Gammaproteobacteria</taxon>
        <taxon>Vibrionales</taxon>
        <taxon>Vibrionaceae</taxon>
        <taxon>Vibrio</taxon>
    </lineage>
</organism>
<comment type="function">
    <text evidence="1">Negatively regulates transcription of bacterial ribonucleotide reductase nrd genes and operons by binding to NrdR-boxes.</text>
</comment>
<comment type="cofactor">
    <cofactor evidence="1">
        <name>Zn(2+)</name>
        <dbReference type="ChEBI" id="CHEBI:29105"/>
    </cofactor>
    <text evidence="1">Binds 1 zinc ion.</text>
</comment>
<comment type="similarity">
    <text evidence="1">Belongs to the NrdR family.</text>
</comment>
<evidence type="ECO:0000255" key="1">
    <source>
        <dbReference type="HAMAP-Rule" id="MF_00440"/>
    </source>
</evidence>
<dbReference type="EMBL" id="FM954972">
    <property type="protein sequence ID" value="CAV19573.1"/>
    <property type="molecule type" value="Genomic_DNA"/>
</dbReference>
<dbReference type="SMR" id="B7VJA9"/>
<dbReference type="STRING" id="575788.VS_2414"/>
<dbReference type="KEGG" id="vsp:VS_2414"/>
<dbReference type="eggNOG" id="COG1327">
    <property type="taxonomic scope" value="Bacteria"/>
</dbReference>
<dbReference type="HOGENOM" id="CLU_108412_0_0_6"/>
<dbReference type="Proteomes" id="UP000009100">
    <property type="component" value="Chromosome 1"/>
</dbReference>
<dbReference type="GO" id="GO:0005524">
    <property type="term" value="F:ATP binding"/>
    <property type="evidence" value="ECO:0007669"/>
    <property type="project" value="UniProtKB-KW"/>
</dbReference>
<dbReference type="GO" id="GO:0003677">
    <property type="term" value="F:DNA binding"/>
    <property type="evidence" value="ECO:0007669"/>
    <property type="project" value="UniProtKB-KW"/>
</dbReference>
<dbReference type="GO" id="GO:0008270">
    <property type="term" value="F:zinc ion binding"/>
    <property type="evidence" value="ECO:0007669"/>
    <property type="project" value="UniProtKB-UniRule"/>
</dbReference>
<dbReference type="GO" id="GO:0045892">
    <property type="term" value="P:negative regulation of DNA-templated transcription"/>
    <property type="evidence" value="ECO:0007669"/>
    <property type="project" value="UniProtKB-UniRule"/>
</dbReference>
<dbReference type="HAMAP" id="MF_00440">
    <property type="entry name" value="NrdR"/>
    <property type="match status" value="1"/>
</dbReference>
<dbReference type="InterPro" id="IPR005144">
    <property type="entry name" value="ATP-cone_dom"/>
</dbReference>
<dbReference type="InterPro" id="IPR055173">
    <property type="entry name" value="NrdR-like_N"/>
</dbReference>
<dbReference type="InterPro" id="IPR003796">
    <property type="entry name" value="RNR_NrdR-like"/>
</dbReference>
<dbReference type="NCBIfam" id="TIGR00244">
    <property type="entry name" value="transcriptional regulator NrdR"/>
    <property type="match status" value="1"/>
</dbReference>
<dbReference type="PANTHER" id="PTHR30455">
    <property type="entry name" value="TRANSCRIPTIONAL REPRESSOR NRDR"/>
    <property type="match status" value="1"/>
</dbReference>
<dbReference type="PANTHER" id="PTHR30455:SF2">
    <property type="entry name" value="TRANSCRIPTIONAL REPRESSOR NRDR"/>
    <property type="match status" value="1"/>
</dbReference>
<dbReference type="Pfam" id="PF03477">
    <property type="entry name" value="ATP-cone"/>
    <property type="match status" value="1"/>
</dbReference>
<dbReference type="Pfam" id="PF22811">
    <property type="entry name" value="Zn_ribbon_NrdR"/>
    <property type="match status" value="1"/>
</dbReference>
<dbReference type="PROSITE" id="PS51161">
    <property type="entry name" value="ATP_CONE"/>
    <property type="match status" value="1"/>
</dbReference>
<protein>
    <recommendedName>
        <fullName evidence="1">Transcriptional repressor NrdR</fullName>
    </recommendedName>
</protein>
<gene>
    <name evidence="1" type="primary">nrdR</name>
    <name type="ordered locus">VS_2414</name>
</gene>
<sequence>MHCPFCSENDTKVIDSRLVADGHQVRRRRQCLACSERFTTFESAELVMPKVIKSNGNREPFNEDKMVGGVQRALEKRPVSADAIELAISTIKSQLRATGEREVPSEMIGNLVMGQLKELDKVAYIRFASVYRSFEDIREFGEEIAKLED</sequence>
<accession>B7VJA9</accession>
<keyword id="KW-0067">ATP-binding</keyword>
<keyword id="KW-0238">DNA-binding</keyword>
<keyword id="KW-0479">Metal-binding</keyword>
<keyword id="KW-0547">Nucleotide-binding</keyword>
<keyword id="KW-0678">Repressor</keyword>
<keyword id="KW-0804">Transcription</keyword>
<keyword id="KW-0805">Transcription regulation</keyword>
<keyword id="KW-0862">Zinc</keyword>
<keyword id="KW-0863">Zinc-finger</keyword>
<proteinExistence type="inferred from homology"/>